<sequence length="7" mass="796">EPYAFGL</sequence>
<dbReference type="GO" id="GO:0005576">
    <property type="term" value="C:extracellular region"/>
    <property type="evidence" value="ECO:0007669"/>
    <property type="project" value="UniProtKB-SubCell"/>
</dbReference>
<dbReference type="GO" id="GO:0007218">
    <property type="term" value="P:neuropeptide signaling pathway"/>
    <property type="evidence" value="ECO:0007669"/>
    <property type="project" value="UniProtKB-KW"/>
</dbReference>
<keyword id="KW-0027">Amidation</keyword>
<keyword id="KW-0903">Direct protein sequencing</keyword>
<keyword id="KW-0527">Neuropeptide</keyword>
<keyword id="KW-0964">Secreted</keyword>
<evidence type="ECO:0000269" key="1">
    <source>
    </source>
</evidence>
<evidence type="ECO:0000305" key="2"/>
<feature type="peptide" id="PRO_0000043460" description="Carcinustatin-3">
    <location>
        <begin position="1"/>
        <end position="7"/>
    </location>
</feature>
<feature type="modified residue" description="Leucine amide" evidence="1">
    <location>
        <position position="7"/>
    </location>
</feature>
<comment type="function">
    <text>May act as a neurotransmitter or neuromodulator.</text>
</comment>
<comment type="subcellular location">
    <subcellularLocation>
        <location>Secreted</location>
    </subcellularLocation>
</comment>
<comment type="similarity">
    <text evidence="2">Belongs to the allatostatin family.</text>
</comment>
<accession>P81806</accession>
<organism>
    <name type="scientific">Carcinus maenas</name>
    <name type="common">Common shore crab</name>
    <name type="synonym">Green crab</name>
    <dbReference type="NCBI Taxonomy" id="6759"/>
    <lineage>
        <taxon>Eukaryota</taxon>
        <taxon>Metazoa</taxon>
        <taxon>Ecdysozoa</taxon>
        <taxon>Arthropoda</taxon>
        <taxon>Crustacea</taxon>
        <taxon>Multicrustacea</taxon>
        <taxon>Malacostraca</taxon>
        <taxon>Eumalacostraca</taxon>
        <taxon>Eucarida</taxon>
        <taxon>Decapoda</taxon>
        <taxon>Pleocyemata</taxon>
        <taxon>Brachyura</taxon>
        <taxon>Eubrachyura</taxon>
        <taxon>Portunoidea</taxon>
        <taxon>Carcinidae</taxon>
        <taxon>Carcinus</taxon>
    </lineage>
</organism>
<name>ALL3_CARMA</name>
<proteinExistence type="evidence at protein level"/>
<protein>
    <recommendedName>
        <fullName>Carcinustatin-3</fullName>
    </recommendedName>
</protein>
<reference key="1">
    <citation type="journal article" date="1997" name="Eur. J. Biochem.">
        <title>Isolation and identification of multiple neuropeptides of the allatostatin superfamily in the shore crab Carcinus maenas.</title>
        <authorList>
            <person name="Duve H."/>
            <person name="Johnsen A.H."/>
            <person name="Maestro J.-L."/>
            <person name="Scott A.G."/>
            <person name="Jaros P.P."/>
            <person name="Thorpe A."/>
        </authorList>
    </citation>
    <scope>PROTEIN SEQUENCE</scope>
    <scope>AMIDATION AT LEU-7</scope>
    <source>
        <tissue>Cerebral ganglion</tissue>
        <tissue>Thoracic ganglion</tissue>
    </source>
</reference>